<comment type="function">
    <text evidence="1">In the intracellular compartments, may function as a channel or small molecule transporter.</text>
</comment>
<comment type="subcellular location">
    <subcellularLocation>
        <location evidence="1">Endosome membrane</location>
        <topology evidence="2">Multi-pass membrane protein</topology>
    </subcellularLocation>
    <subcellularLocation>
        <location evidence="3">Golgi outpost</location>
    </subcellularLocation>
    <subcellularLocation>
        <location evidence="3">Cytoplasm</location>
        <location evidence="3">Cytoskeleton</location>
        <location evidence="3">Microtubule organizing center</location>
    </subcellularLocation>
    <text evidence="3">Localizes to the postsynaptic Golgi apparatus region, also named Golgi outpost, which shapes dendrite morphology by functioning as sites of acentrosomal microtubule nucleation.</text>
</comment>
<comment type="similarity">
    <text evidence="4">Belongs to the nonaspanin (TM9SF) (TC 9.A.2) family.</text>
</comment>
<name>TM9S2_RAT</name>
<proteinExistence type="evidence at transcript level"/>
<sequence length="663" mass="75586">MSSRPPASLPARGPRLLLLSLLLLGTVPGPRPGSAFYLPGLAPVNFCTEEKKSNECKAEIELFVNRLDSVESVLPYEYTAFDFCQASEGKRPSENLGQVLFGERIEPSPYKFTFNKEETCKLVCTKTYHTEKAEDKQKLDFLKKSMLLNYQHHWIVDNMPVTWCYEVEDNQKFCNPGFPIGCYITDKGHAKDACVISSEFHERDTFYIFNHVDIKIQYHVVETGSMGARLVAAKLEPKSFRHTHIDKPDCSGPAMDISNKASGEIKIAYTYSISFEEEKNIRWASRWDYILESMPHTHIQWFSIMNSLVIVLFLSGMVAMIMLRTLHKDIARYNQMDSTEDAQEEFGWKLVHGDIFRPPRKGMLLSVFLGSGTQILIMTFVTLFFACLGFLSPANRGALMTCAVVLWVLLGTPAGYVAARFYKSFGGEKWKTNVLLTSFLCPGIVFADFFIMNLILWGEGSSAAIPFGTLVAILALWFCISVPLTFIGAYFGFKKNAIEHPVRTNQIPRQIPEQSFYTKPLPGIIMGGILPFGCIFIQLFFILNSIWSHQMYYMFGFLFLVFIILVITCSEATILLCYFHLCAEDYHWQWRSFLTSGFTAVYFLVYAIHYFFSKLQITGTASTILYFGYTMIMVLIFFLFTGTIGFFACFWFVTKIYSVVKVD</sequence>
<accession>Q66HG5</accession>
<dbReference type="EMBL" id="BC081873">
    <property type="protein sequence ID" value="AAH81873.1"/>
    <property type="molecule type" value="mRNA"/>
</dbReference>
<dbReference type="RefSeq" id="NP_001005554.1">
    <property type="nucleotide sequence ID" value="NM_001005554.1"/>
</dbReference>
<dbReference type="RefSeq" id="XP_063130429.1">
    <property type="nucleotide sequence ID" value="XM_063274359.1"/>
</dbReference>
<dbReference type="RefSeq" id="XP_063130430.1">
    <property type="nucleotide sequence ID" value="XM_063274360.1"/>
</dbReference>
<dbReference type="FunCoup" id="Q66HG5">
    <property type="interactions" value="2035"/>
</dbReference>
<dbReference type="IntAct" id="Q66HG5">
    <property type="interactions" value="1"/>
</dbReference>
<dbReference type="STRING" id="10116.ENSRNOP00000017211"/>
<dbReference type="PhosphoSitePlus" id="Q66HG5"/>
<dbReference type="SwissPalm" id="Q66HG5"/>
<dbReference type="jPOST" id="Q66HG5"/>
<dbReference type="PaxDb" id="10116-ENSRNOP00000017211"/>
<dbReference type="Ensembl" id="ENSRNOT00000017211.7">
    <property type="protein sequence ID" value="ENSRNOP00000017211.5"/>
    <property type="gene ID" value="ENSRNOG00000012751.8"/>
</dbReference>
<dbReference type="GeneID" id="306197"/>
<dbReference type="KEGG" id="rno:306197"/>
<dbReference type="AGR" id="RGD:1359230"/>
<dbReference type="CTD" id="9375"/>
<dbReference type="RGD" id="1359230">
    <property type="gene designation" value="Tm9sf2"/>
</dbReference>
<dbReference type="eggNOG" id="KOG1278">
    <property type="taxonomic scope" value="Eukaryota"/>
</dbReference>
<dbReference type="GeneTree" id="ENSGT00940000157563"/>
<dbReference type="HOGENOM" id="CLU_010714_4_1_1"/>
<dbReference type="InParanoid" id="Q66HG5"/>
<dbReference type="OMA" id="KVYYMFG"/>
<dbReference type="OrthoDB" id="1666796at2759"/>
<dbReference type="PRO" id="PR:Q66HG5"/>
<dbReference type="Proteomes" id="UP000002494">
    <property type="component" value="Chromosome 15"/>
</dbReference>
<dbReference type="Bgee" id="ENSRNOG00000012751">
    <property type="expression patterns" value="Expressed in jejunum and 20 other cell types or tissues"/>
</dbReference>
<dbReference type="GO" id="GO:0010008">
    <property type="term" value="C:endosome membrane"/>
    <property type="evidence" value="ECO:0007669"/>
    <property type="project" value="UniProtKB-SubCell"/>
</dbReference>
<dbReference type="GO" id="GO:0005794">
    <property type="term" value="C:Golgi apparatus"/>
    <property type="evidence" value="ECO:0000250"/>
    <property type="project" value="UniProtKB"/>
</dbReference>
<dbReference type="GO" id="GO:0016020">
    <property type="term" value="C:membrane"/>
    <property type="evidence" value="ECO:0000318"/>
    <property type="project" value="GO_Central"/>
</dbReference>
<dbReference type="GO" id="GO:0005815">
    <property type="term" value="C:microtubule organizing center"/>
    <property type="evidence" value="ECO:0007669"/>
    <property type="project" value="UniProtKB-SubCell"/>
</dbReference>
<dbReference type="GO" id="GO:0006672">
    <property type="term" value="P:ceramide metabolic process"/>
    <property type="evidence" value="ECO:0000266"/>
    <property type="project" value="RGD"/>
</dbReference>
<dbReference type="GO" id="GO:0006688">
    <property type="term" value="P:glycosphingolipid biosynthetic process"/>
    <property type="evidence" value="ECO:0000266"/>
    <property type="project" value="RGD"/>
</dbReference>
<dbReference type="GO" id="GO:0072657">
    <property type="term" value="P:protein localization to membrane"/>
    <property type="evidence" value="ECO:0000318"/>
    <property type="project" value="GO_Central"/>
</dbReference>
<dbReference type="GO" id="GO:0010908">
    <property type="term" value="P:regulation of heparan sulfate proteoglycan biosynthetic process"/>
    <property type="evidence" value="ECO:0000266"/>
    <property type="project" value="RGD"/>
</dbReference>
<dbReference type="InterPro" id="IPR004240">
    <property type="entry name" value="EMP70"/>
</dbReference>
<dbReference type="PANTHER" id="PTHR10766:SF111">
    <property type="entry name" value="TRANSMEMBRANE 9 SUPERFAMILY MEMBER 2"/>
    <property type="match status" value="1"/>
</dbReference>
<dbReference type="PANTHER" id="PTHR10766">
    <property type="entry name" value="TRANSMEMBRANE 9 SUPERFAMILY PROTEIN"/>
    <property type="match status" value="1"/>
</dbReference>
<dbReference type="Pfam" id="PF02990">
    <property type="entry name" value="EMP70"/>
    <property type="match status" value="1"/>
</dbReference>
<keyword id="KW-0963">Cytoplasm</keyword>
<keyword id="KW-0206">Cytoskeleton</keyword>
<keyword id="KW-0967">Endosome</keyword>
<keyword id="KW-0333">Golgi apparatus</keyword>
<keyword id="KW-0472">Membrane</keyword>
<keyword id="KW-1185">Reference proteome</keyword>
<keyword id="KW-0732">Signal</keyword>
<keyword id="KW-0812">Transmembrane</keyword>
<keyword id="KW-1133">Transmembrane helix</keyword>
<evidence type="ECO:0000250" key="1">
    <source>
        <dbReference type="UniProtKB" id="Q99805"/>
    </source>
</evidence>
<evidence type="ECO:0000255" key="2"/>
<evidence type="ECO:0000269" key="3">
    <source>
    </source>
</evidence>
<evidence type="ECO:0000305" key="4"/>
<gene>
    <name type="primary">Tm9sf2</name>
</gene>
<reference key="1">
    <citation type="journal article" date="2004" name="Genome Res.">
        <title>The status, quality, and expansion of the NIH full-length cDNA project: the Mammalian Gene Collection (MGC).</title>
        <authorList>
            <consortium name="The MGC Project Team"/>
        </authorList>
    </citation>
    <scope>NUCLEOTIDE SEQUENCE [LARGE SCALE MRNA]</scope>
    <source>
        <tissue>Kidney</tissue>
    </source>
</reference>
<reference key="2">
    <citation type="journal article" date="2019" name="Cell">
        <title>The Golgi outpost protein TPPP nucleates microtubules and is critical for myelination.</title>
        <authorList>
            <person name="Fu M.M."/>
            <person name="McAlear T.S."/>
            <person name="Nguyen H."/>
            <person name="Oses-Prieto J.A."/>
            <person name="Valenzuela A."/>
            <person name="Shi R.D."/>
            <person name="Perrino J.J."/>
            <person name="Huang T.T."/>
            <person name="Burlingame A.L."/>
            <person name="Bechstedt S."/>
            <person name="Barres B.A."/>
        </authorList>
    </citation>
    <scope>SUBCELLULAR LOCATION</scope>
</reference>
<protein>
    <recommendedName>
        <fullName>Transmembrane 9 superfamily member 2</fullName>
    </recommendedName>
</protein>
<feature type="signal peptide" evidence="2">
    <location>
        <begin position="1"/>
        <end position="28"/>
    </location>
</feature>
<feature type="chain" id="PRO_0000034368" description="Transmembrane 9 superfamily member 2">
    <location>
        <begin position="29"/>
        <end position="663"/>
    </location>
</feature>
<feature type="topological domain" description="Lumenal" evidence="2">
    <location>
        <begin position="29"/>
        <end position="300"/>
    </location>
</feature>
<feature type="transmembrane region" description="Helical" evidence="2">
    <location>
        <begin position="301"/>
        <end position="321"/>
    </location>
</feature>
<feature type="topological domain" description="Cytoplasmic" evidence="2">
    <location>
        <begin position="322"/>
        <end position="374"/>
    </location>
</feature>
<feature type="transmembrane region" description="Helical" evidence="2">
    <location>
        <begin position="375"/>
        <end position="395"/>
    </location>
</feature>
<feature type="topological domain" description="Lumenal" evidence="2">
    <location>
        <begin position="396"/>
        <end position="398"/>
    </location>
</feature>
<feature type="transmembrane region" description="Helical" evidence="2">
    <location>
        <begin position="399"/>
        <end position="419"/>
    </location>
</feature>
<feature type="topological domain" description="Cytoplasmic" evidence="2">
    <location>
        <begin position="420"/>
        <end position="437"/>
    </location>
</feature>
<feature type="transmembrane region" description="Helical" evidence="2">
    <location>
        <begin position="438"/>
        <end position="458"/>
    </location>
</feature>
<feature type="topological domain" description="Lumenal" evidence="2">
    <location>
        <begin position="459"/>
        <end position="466"/>
    </location>
</feature>
<feature type="transmembrane region" description="Helical" evidence="2">
    <location>
        <begin position="467"/>
        <end position="487"/>
    </location>
</feature>
<feature type="topological domain" description="Cytoplasmic" evidence="2">
    <location>
        <begin position="488"/>
        <end position="522"/>
    </location>
</feature>
<feature type="transmembrane region" description="Helical" evidence="2">
    <location>
        <begin position="523"/>
        <end position="543"/>
    </location>
</feature>
<feature type="topological domain" description="Lumenal" evidence="2">
    <location>
        <begin position="544"/>
        <end position="554"/>
    </location>
</feature>
<feature type="transmembrane region" description="Helical" evidence="2">
    <location>
        <begin position="555"/>
        <end position="575"/>
    </location>
</feature>
<feature type="topological domain" description="Cytoplasmic" evidence="2">
    <location>
        <begin position="576"/>
        <end position="591"/>
    </location>
</feature>
<feature type="transmembrane region" description="Helical" evidence="2">
    <location>
        <begin position="592"/>
        <end position="612"/>
    </location>
</feature>
<feature type="topological domain" description="Lumenal" evidence="2">
    <location>
        <begin position="613"/>
        <end position="631"/>
    </location>
</feature>
<feature type="transmembrane region" description="Helical" evidence="2">
    <location>
        <begin position="632"/>
        <end position="652"/>
    </location>
</feature>
<feature type="topological domain" description="Cytoplasmic" evidence="2">
    <location>
        <begin position="653"/>
        <end position="663"/>
    </location>
</feature>
<organism>
    <name type="scientific">Rattus norvegicus</name>
    <name type="common">Rat</name>
    <dbReference type="NCBI Taxonomy" id="10116"/>
    <lineage>
        <taxon>Eukaryota</taxon>
        <taxon>Metazoa</taxon>
        <taxon>Chordata</taxon>
        <taxon>Craniata</taxon>
        <taxon>Vertebrata</taxon>
        <taxon>Euteleostomi</taxon>
        <taxon>Mammalia</taxon>
        <taxon>Eutheria</taxon>
        <taxon>Euarchontoglires</taxon>
        <taxon>Glires</taxon>
        <taxon>Rodentia</taxon>
        <taxon>Myomorpha</taxon>
        <taxon>Muroidea</taxon>
        <taxon>Muridae</taxon>
        <taxon>Murinae</taxon>
        <taxon>Rattus</taxon>
    </lineage>
</organism>